<dbReference type="EC" id="1.4.4.2" evidence="1"/>
<dbReference type="EMBL" id="AJ301559">
    <property type="protein sequence ID" value="CAD52982.1"/>
    <property type="molecule type" value="Genomic_DNA"/>
</dbReference>
<dbReference type="SMR" id="Q8G9M2"/>
<dbReference type="STRING" id="1443905.GCA_000761075_02925"/>
<dbReference type="GO" id="GO:0005829">
    <property type="term" value="C:cytosol"/>
    <property type="evidence" value="ECO:0007669"/>
    <property type="project" value="TreeGrafter"/>
</dbReference>
<dbReference type="GO" id="GO:0005960">
    <property type="term" value="C:glycine cleavage complex"/>
    <property type="evidence" value="ECO:0007669"/>
    <property type="project" value="TreeGrafter"/>
</dbReference>
<dbReference type="GO" id="GO:0016594">
    <property type="term" value="F:glycine binding"/>
    <property type="evidence" value="ECO:0007669"/>
    <property type="project" value="TreeGrafter"/>
</dbReference>
<dbReference type="GO" id="GO:0004375">
    <property type="term" value="F:glycine dehydrogenase (decarboxylating) activity"/>
    <property type="evidence" value="ECO:0007669"/>
    <property type="project" value="UniProtKB-EC"/>
</dbReference>
<dbReference type="GO" id="GO:0030170">
    <property type="term" value="F:pyridoxal phosphate binding"/>
    <property type="evidence" value="ECO:0007669"/>
    <property type="project" value="TreeGrafter"/>
</dbReference>
<dbReference type="GO" id="GO:0019464">
    <property type="term" value="P:glycine decarboxylation via glycine cleavage system"/>
    <property type="evidence" value="ECO:0007669"/>
    <property type="project" value="TreeGrafter"/>
</dbReference>
<dbReference type="CDD" id="cd00613">
    <property type="entry name" value="GDC-P"/>
    <property type="match status" value="1"/>
</dbReference>
<dbReference type="FunFam" id="3.40.640.10:FF:000005">
    <property type="entry name" value="Glycine dehydrogenase (decarboxylating), mitochondrial"/>
    <property type="match status" value="1"/>
</dbReference>
<dbReference type="FunFam" id="3.40.640.10:FF:000007">
    <property type="entry name" value="glycine dehydrogenase (Decarboxylating), mitochondrial"/>
    <property type="match status" value="1"/>
</dbReference>
<dbReference type="Gene3D" id="3.90.1150.10">
    <property type="entry name" value="Aspartate Aminotransferase, domain 1"/>
    <property type="match status" value="2"/>
</dbReference>
<dbReference type="Gene3D" id="3.40.640.10">
    <property type="entry name" value="Type I PLP-dependent aspartate aminotransferase-like (Major domain)"/>
    <property type="match status" value="2"/>
</dbReference>
<dbReference type="HAMAP" id="MF_00711">
    <property type="entry name" value="GcvP"/>
    <property type="match status" value="1"/>
</dbReference>
<dbReference type="InterPro" id="IPR003437">
    <property type="entry name" value="GcvP"/>
</dbReference>
<dbReference type="InterPro" id="IPR049316">
    <property type="entry name" value="GDC-P_C"/>
</dbReference>
<dbReference type="InterPro" id="IPR049315">
    <property type="entry name" value="GDC-P_N"/>
</dbReference>
<dbReference type="InterPro" id="IPR020581">
    <property type="entry name" value="GDC_P"/>
</dbReference>
<dbReference type="InterPro" id="IPR015424">
    <property type="entry name" value="PyrdxlP-dep_Trfase"/>
</dbReference>
<dbReference type="InterPro" id="IPR015421">
    <property type="entry name" value="PyrdxlP-dep_Trfase_major"/>
</dbReference>
<dbReference type="InterPro" id="IPR015422">
    <property type="entry name" value="PyrdxlP-dep_Trfase_small"/>
</dbReference>
<dbReference type="NCBIfam" id="TIGR00461">
    <property type="entry name" value="gcvP"/>
    <property type="match status" value="1"/>
</dbReference>
<dbReference type="NCBIfam" id="NF003346">
    <property type="entry name" value="PRK04366.1"/>
    <property type="match status" value="1"/>
</dbReference>
<dbReference type="PANTHER" id="PTHR11773:SF1">
    <property type="entry name" value="GLYCINE DEHYDROGENASE (DECARBOXYLATING), MITOCHONDRIAL"/>
    <property type="match status" value="1"/>
</dbReference>
<dbReference type="PANTHER" id="PTHR11773">
    <property type="entry name" value="GLYCINE DEHYDROGENASE, DECARBOXYLATING"/>
    <property type="match status" value="1"/>
</dbReference>
<dbReference type="Pfam" id="PF21478">
    <property type="entry name" value="GcvP2_C"/>
    <property type="match status" value="1"/>
</dbReference>
<dbReference type="Pfam" id="PF02347">
    <property type="entry name" value="GDC-P"/>
    <property type="match status" value="2"/>
</dbReference>
<dbReference type="SUPFAM" id="SSF53383">
    <property type="entry name" value="PLP-dependent transferases"/>
    <property type="match status" value="2"/>
</dbReference>
<organism>
    <name type="scientific">Rhodococcoides fascians</name>
    <name type="common">Rhodococcus fascians</name>
    <dbReference type="NCBI Taxonomy" id="1828"/>
    <lineage>
        <taxon>Bacteria</taxon>
        <taxon>Bacillati</taxon>
        <taxon>Actinomycetota</taxon>
        <taxon>Actinomycetes</taxon>
        <taxon>Mycobacteriales</taxon>
        <taxon>Nocardiaceae</taxon>
        <taxon>Rhodococcoides</taxon>
    </lineage>
</organism>
<gene>
    <name evidence="1" type="primary">gcvP</name>
    <name type="synonym">gcvB</name>
</gene>
<feature type="chain" id="PRO_0000166933" description="Glycine dehydrogenase (decarboxylating)">
    <location>
        <begin position="1" status="less than"/>
        <end position="949"/>
    </location>
</feature>
<feature type="modified residue" description="N6-(pyridoxal phosphate)lysine" evidence="1">
    <location>
        <position position="702"/>
    </location>
</feature>
<feature type="non-terminal residue">
    <location>
        <position position="1"/>
    </location>
</feature>
<keyword id="KW-0560">Oxidoreductase</keyword>
<keyword id="KW-0663">Pyridoxal phosphate</keyword>
<reference key="1">
    <citation type="journal article" date="2002" name="J. Bacteriol.">
        <title>Chromosomal locus that affects pathogenicity of Rhodococcus fascians.</title>
        <authorList>
            <person name="Vereecke D.M."/>
            <person name="Cornelis K."/>
            <person name="Temmerman W."/>
            <person name="Jaziri M."/>
            <person name="Van Montagu M."/>
            <person name="Holsters M."/>
            <person name="Goethals K."/>
        </authorList>
    </citation>
    <scope>NUCLEOTIDE SEQUENCE [GENOMIC DNA]</scope>
    <source>
        <strain>D188</strain>
    </source>
</reference>
<sequence>TDRMTSTASAFVDRHVGPDTTELARILDAIGVDSLDELARKAVPESILDTVVDGVPDGLATLPPALSEHDALAALADLAGCNTVATSMIGLGYYDTLTPPVLTRGILENPAWYTAYTPYQPEISQGRLEALLNFQTMVSDLTGMDVANASMLDESTAAAESMTLMRRANRGSKSPRLVVDSDIFPQTKAVLATRAEPLGIELVYADLADGLPEGDFFGVLAQLPGASGRLVDHTATIEAAHERGALVAVGVDLLAATLVTAPGEIGADVCFGTTQRFGVPMGYGGPHAGYLAVRSGHSRQLPGRLVGVSVDADGHRAYRLALQTREQHIRREKATSNICTAQVLLAIVAAMYASYHGADGLRAIARRVNTRARTVAAGLQAAGIDVVHAEFFDTVLAAVPGAAHTVVDAAKQRGINLRPVDDDHVAIACDEATTEAHIVDVLAAFGAEPAGPGAESVPADCARTSEYLTHPAFTRYRTETAMLRYLRALSDKDIALDRSMIPLGSCTMKLNATAEMESITWPQFARQHPFAPSTDVPGLLRVIADLEQWLVDITGYDAVSLQPNAGSQGEYAGLLAIRRYHQANGDTGRTVCLIPSSAHGTNAASAVMVGMRVVVVACRPNGDVDVDDLRAKIAEHADTLAAIMITYPSTHGVYEHEISDICAAVHDAGGQVYVDGANLNALVGLARPGRFGGDVSHLNLHKTFCIPHGGGGPGVGPIGVRSHLQPYLPGHPLAPQLGDGPTVAGAPYGSASILTITWAYIAMMGAQGLRRATLTAIASANYIARRLDEYFPVLYTGDNGMVAHECILDLRGLTKDTGVTVDDVAKRLADYGFHAPTMSFPVPGTLMVEPTESENLEEIDAFCDAMISIRREIDRVGSGEWTVEDNPLRGAPHTAQCLVADWNHPYSRELAAYPAGYDRPKVWPAVRRIDGAHGDRNLVCSCPPIEAFA</sequence>
<protein>
    <recommendedName>
        <fullName evidence="1">Glycine dehydrogenase (decarboxylating)</fullName>
        <ecNumber evidence="1">1.4.4.2</ecNumber>
    </recommendedName>
    <alternativeName>
        <fullName evidence="1">Glycine cleavage system P-protein</fullName>
    </alternativeName>
    <alternativeName>
        <fullName evidence="1">Glycine decarboxylase</fullName>
    </alternativeName>
    <alternativeName>
        <fullName evidence="1">Glycine dehydrogenase (aminomethyl-transferring)</fullName>
    </alternativeName>
</protein>
<comment type="function">
    <text evidence="1">The glycine cleavage system catalyzes the degradation of glycine. The P protein binds the alpha-amino group of glycine through its pyridoxal phosphate cofactor; CO(2) is released and the remaining methylamine moiety is then transferred to the lipoamide cofactor of the H protein.</text>
</comment>
<comment type="catalytic activity">
    <reaction evidence="1">
        <text>N(6)-[(R)-lipoyl]-L-lysyl-[glycine-cleavage complex H protein] + glycine + H(+) = N(6)-[(R)-S(8)-aminomethyldihydrolipoyl]-L-lysyl-[glycine-cleavage complex H protein] + CO2</text>
        <dbReference type="Rhea" id="RHEA:24304"/>
        <dbReference type="Rhea" id="RHEA-COMP:10494"/>
        <dbReference type="Rhea" id="RHEA-COMP:10495"/>
        <dbReference type="ChEBI" id="CHEBI:15378"/>
        <dbReference type="ChEBI" id="CHEBI:16526"/>
        <dbReference type="ChEBI" id="CHEBI:57305"/>
        <dbReference type="ChEBI" id="CHEBI:83099"/>
        <dbReference type="ChEBI" id="CHEBI:83143"/>
        <dbReference type="EC" id="1.4.4.2"/>
    </reaction>
</comment>
<comment type="cofactor">
    <cofactor evidence="1">
        <name>pyridoxal 5'-phosphate</name>
        <dbReference type="ChEBI" id="CHEBI:597326"/>
    </cofactor>
</comment>
<comment type="subunit">
    <text evidence="1">The glycine cleavage system is composed of four proteins: P, T, L and H.</text>
</comment>
<comment type="similarity">
    <text evidence="1">Belongs to the GcvP family.</text>
</comment>
<accession>Q8G9M2</accession>
<evidence type="ECO:0000255" key="1">
    <source>
        <dbReference type="HAMAP-Rule" id="MF_00711"/>
    </source>
</evidence>
<proteinExistence type="inferred from homology"/>
<name>GCSP_RHOFA</name>